<reference key="1">
    <citation type="journal article" date="2006" name="J. Bacteriol.">
        <title>Genome sequence of Aeromonas hydrophila ATCC 7966T: jack of all trades.</title>
        <authorList>
            <person name="Seshadri R."/>
            <person name="Joseph S.W."/>
            <person name="Chopra A.K."/>
            <person name="Sha J."/>
            <person name="Shaw J."/>
            <person name="Graf J."/>
            <person name="Haft D.H."/>
            <person name="Wu M."/>
            <person name="Ren Q."/>
            <person name="Rosovitz M.J."/>
            <person name="Madupu R."/>
            <person name="Tallon L."/>
            <person name="Kim M."/>
            <person name="Jin S."/>
            <person name="Vuong H."/>
            <person name="Stine O.C."/>
            <person name="Ali A."/>
            <person name="Horneman A.J."/>
            <person name="Heidelberg J.F."/>
        </authorList>
    </citation>
    <scope>NUCLEOTIDE SEQUENCE [LARGE SCALE GENOMIC DNA]</scope>
    <source>
        <strain>ATCC 7966 / DSM 30187 / BCRC 13018 / CCUG 14551 / JCM 1027 / KCTC 2358 / NCIMB 9240 / NCTC 8049</strain>
    </source>
</reference>
<gene>
    <name evidence="1" type="primary">mnmE</name>
    <name evidence="1" type="synonym">trmE</name>
    <name type="ordered locus">AHA_4280</name>
</gene>
<accession>A0KQZ6</accession>
<name>MNME_AERHH</name>
<organism>
    <name type="scientific">Aeromonas hydrophila subsp. hydrophila (strain ATCC 7966 / DSM 30187 / BCRC 13018 / CCUG 14551 / JCM 1027 / KCTC 2358 / NCIMB 9240 / NCTC 8049)</name>
    <dbReference type="NCBI Taxonomy" id="380703"/>
    <lineage>
        <taxon>Bacteria</taxon>
        <taxon>Pseudomonadati</taxon>
        <taxon>Pseudomonadota</taxon>
        <taxon>Gammaproteobacteria</taxon>
        <taxon>Aeromonadales</taxon>
        <taxon>Aeromonadaceae</taxon>
        <taxon>Aeromonas</taxon>
    </lineage>
</organism>
<sequence length="453" mass="49385">MTTDTIVAQATAPGRGGVGIVRVSGPAAEQVAEIVLGKLPRVRYAEYLPFRDEQGQPLDQGIALLFKAPNSFTGEDVLELQGHGGPVIMDMLVRRILQIKGLRPARPGEFSERAFMNDKLDLAQAEAIADLIEASSEQAARSAMHSLQGQFSGKIQQLVESLTRLRIYVEAAIDFPDEEIDFLSDGKVAGDLYAIMAELDDVRGEAKQGALLREGMKVVIAGRPNAGKSSLLNALAGRESAIVTEIAGTTRDVLREHIHLDGMPLHIIDTAGLRDTQDKVEQIGIERAWAEIEQADRVLFMVDGTTTAAVDPREIWPEFVDRLPKKIGLTVVRNKADLTGEDLAPSQELGHAVYRISAKTELGLSALREHLKACMGFQGNTEGGFMARRRHLDALERAAERLLVAKEQLEVFVAGELVAEELRLAQESLSEITGEFSSDDLLGRIFSSFCIGK</sequence>
<dbReference type="EC" id="3.6.-.-" evidence="1"/>
<dbReference type="EMBL" id="CP000462">
    <property type="protein sequence ID" value="ABK37592.1"/>
    <property type="molecule type" value="Genomic_DNA"/>
</dbReference>
<dbReference type="RefSeq" id="WP_011707924.1">
    <property type="nucleotide sequence ID" value="NC_008570.1"/>
</dbReference>
<dbReference type="RefSeq" id="YP_858697.1">
    <property type="nucleotide sequence ID" value="NC_008570.1"/>
</dbReference>
<dbReference type="SMR" id="A0KQZ6"/>
<dbReference type="STRING" id="380703.AHA_4280"/>
<dbReference type="EnsemblBacteria" id="ABK37592">
    <property type="protein sequence ID" value="ABK37592"/>
    <property type="gene ID" value="AHA_4280"/>
</dbReference>
<dbReference type="GeneID" id="4488803"/>
<dbReference type="KEGG" id="aha:AHA_4280"/>
<dbReference type="PATRIC" id="fig|380703.7.peg.4229"/>
<dbReference type="eggNOG" id="COG0486">
    <property type="taxonomic scope" value="Bacteria"/>
</dbReference>
<dbReference type="HOGENOM" id="CLU_019624_4_1_6"/>
<dbReference type="OrthoDB" id="9805918at2"/>
<dbReference type="Proteomes" id="UP000000756">
    <property type="component" value="Chromosome"/>
</dbReference>
<dbReference type="GO" id="GO:0005829">
    <property type="term" value="C:cytosol"/>
    <property type="evidence" value="ECO:0007669"/>
    <property type="project" value="TreeGrafter"/>
</dbReference>
<dbReference type="GO" id="GO:0005525">
    <property type="term" value="F:GTP binding"/>
    <property type="evidence" value="ECO:0007669"/>
    <property type="project" value="UniProtKB-UniRule"/>
</dbReference>
<dbReference type="GO" id="GO:0003924">
    <property type="term" value="F:GTPase activity"/>
    <property type="evidence" value="ECO:0007669"/>
    <property type="project" value="UniProtKB-UniRule"/>
</dbReference>
<dbReference type="GO" id="GO:0046872">
    <property type="term" value="F:metal ion binding"/>
    <property type="evidence" value="ECO:0007669"/>
    <property type="project" value="UniProtKB-KW"/>
</dbReference>
<dbReference type="GO" id="GO:0030488">
    <property type="term" value="P:tRNA methylation"/>
    <property type="evidence" value="ECO:0007669"/>
    <property type="project" value="TreeGrafter"/>
</dbReference>
<dbReference type="GO" id="GO:0002098">
    <property type="term" value="P:tRNA wobble uridine modification"/>
    <property type="evidence" value="ECO:0007669"/>
    <property type="project" value="TreeGrafter"/>
</dbReference>
<dbReference type="CDD" id="cd04164">
    <property type="entry name" value="trmE"/>
    <property type="match status" value="1"/>
</dbReference>
<dbReference type="CDD" id="cd14858">
    <property type="entry name" value="TrmE_N"/>
    <property type="match status" value="1"/>
</dbReference>
<dbReference type="FunFam" id="3.30.1360.120:FF:000001">
    <property type="entry name" value="tRNA modification GTPase MnmE"/>
    <property type="match status" value="1"/>
</dbReference>
<dbReference type="FunFam" id="3.40.50.300:FF:000249">
    <property type="entry name" value="tRNA modification GTPase MnmE"/>
    <property type="match status" value="1"/>
</dbReference>
<dbReference type="Gene3D" id="3.40.50.300">
    <property type="entry name" value="P-loop containing nucleotide triphosphate hydrolases"/>
    <property type="match status" value="1"/>
</dbReference>
<dbReference type="Gene3D" id="3.30.1360.120">
    <property type="entry name" value="Probable tRNA modification gtpase trme, domain 1"/>
    <property type="match status" value="1"/>
</dbReference>
<dbReference type="Gene3D" id="1.20.120.430">
    <property type="entry name" value="tRNA modification GTPase MnmE domain 2"/>
    <property type="match status" value="1"/>
</dbReference>
<dbReference type="HAMAP" id="MF_00379">
    <property type="entry name" value="GTPase_MnmE"/>
    <property type="match status" value="1"/>
</dbReference>
<dbReference type="InterPro" id="IPR031168">
    <property type="entry name" value="G_TrmE"/>
</dbReference>
<dbReference type="InterPro" id="IPR006073">
    <property type="entry name" value="GTP-bd"/>
</dbReference>
<dbReference type="InterPro" id="IPR018948">
    <property type="entry name" value="GTP-bd_TrmE_N"/>
</dbReference>
<dbReference type="InterPro" id="IPR004520">
    <property type="entry name" value="GTPase_MnmE"/>
</dbReference>
<dbReference type="InterPro" id="IPR027368">
    <property type="entry name" value="MnmE_dom2"/>
</dbReference>
<dbReference type="InterPro" id="IPR025867">
    <property type="entry name" value="MnmE_helical"/>
</dbReference>
<dbReference type="InterPro" id="IPR027417">
    <property type="entry name" value="P-loop_NTPase"/>
</dbReference>
<dbReference type="InterPro" id="IPR005225">
    <property type="entry name" value="Small_GTP-bd"/>
</dbReference>
<dbReference type="InterPro" id="IPR027266">
    <property type="entry name" value="TrmE/GcvT_dom1"/>
</dbReference>
<dbReference type="NCBIfam" id="TIGR00450">
    <property type="entry name" value="mnmE_trmE_thdF"/>
    <property type="match status" value="1"/>
</dbReference>
<dbReference type="NCBIfam" id="NF003661">
    <property type="entry name" value="PRK05291.1-3"/>
    <property type="match status" value="1"/>
</dbReference>
<dbReference type="NCBIfam" id="TIGR00231">
    <property type="entry name" value="small_GTP"/>
    <property type="match status" value="1"/>
</dbReference>
<dbReference type="PANTHER" id="PTHR42714">
    <property type="entry name" value="TRNA MODIFICATION GTPASE GTPBP3"/>
    <property type="match status" value="1"/>
</dbReference>
<dbReference type="PANTHER" id="PTHR42714:SF2">
    <property type="entry name" value="TRNA MODIFICATION GTPASE GTPBP3, MITOCHONDRIAL"/>
    <property type="match status" value="1"/>
</dbReference>
<dbReference type="Pfam" id="PF01926">
    <property type="entry name" value="MMR_HSR1"/>
    <property type="match status" value="1"/>
</dbReference>
<dbReference type="Pfam" id="PF12631">
    <property type="entry name" value="MnmE_helical"/>
    <property type="match status" value="1"/>
</dbReference>
<dbReference type="Pfam" id="PF10396">
    <property type="entry name" value="TrmE_N"/>
    <property type="match status" value="1"/>
</dbReference>
<dbReference type="SUPFAM" id="SSF52540">
    <property type="entry name" value="P-loop containing nucleoside triphosphate hydrolases"/>
    <property type="match status" value="1"/>
</dbReference>
<dbReference type="SUPFAM" id="SSF116878">
    <property type="entry name" value="TrmE connector domain"/>
    <property type="match status" value="1"/>
</dbReference>
<dbReference type="PROSITE" id="PS51709">
    <property type="entry name" value="G_TRME"/>
    <property type="match status" value="1"/>
</dbReference>
<keyword id="KW-0963">Cytoplasm</keyword>
<keyword id="KW-0342">GTP-binding</keyword>
<keyword id="KW-0378">Hydrolase</keyword>
<keyword id="KW-0460">Magnesium</keyword>
<keyword id="KW-0479">Metal-binding</keyword>
<keyword id="KW-0547">Nucleotide-binding</keyword>
<keyword id="KW-0630">Potassium</keyword>
<keyword id="KW-1185">Reference proteome</keyword>
<keyword id="KW-0819">tRNA processing</keyword>
<protein>
    <recommendedName>
        <fullName evidence="1">tRNA modification GTPase MnmE</fullName>
        <ecNumber evidence="1">3.6.-.-</ecNumber>
    </recommendedName>
</protein>
<comment type="function">
    <text evidence="1">Exhibits a very high intrinsic GTPase hydrolysis rate. Involved in the addition of a carboxymethylaminomethyl (cmnm) group at the wobble position (U34) of certain tRNAs, forming tRNA-cmnm(5)s(2)U34.</text>
</comment>
<comment type="cofactor">
    <cofactor evidence="1">
        <name>K(+)</name>
        <dbReference type="ChEBI" id="CHEBI:29103"/>
    </cofactor>
    <text evidence="1">Binds 1 potassium ion per subunit.</text>
</comment>
<comment type="subunit">
    <text evidence="1">Homodimer. Heterotetramer of two MnmE and two MnmG subunits.</text>
</comment>
<comment type="subcellular location">
    <subcellularLocation>
        <location evidence="1">Cytoplasm</location>
    </subcellularLocation>
</comment>
<comment type="similarity">
    <text evidence="1">Belongs to the TRAFAC class TrmE-Era-EngA-EngB-Septin-like GTPase superfamily. TrmE GTPase family.</text>
</comment>
<proteinExistence type="inferred from homology"/>
<evidence type="ECO:0000255" key="1">
    <source>
        <dbReference type="HAMAP-Rule" id="MF_00379"/>
    </source>
</evidence>
<feature type="chain" id="PRO_1000048793" description="tRNA modification GTPase MnmE">
    <location>
        <begin position="1"/>
        <end position="453"/>
    </location>
</feature>
<feature type="domain" description="TrmE-type G">
    <location>
        <begin position="215"/>
        <end position="376"/>
    </location>
</feature>
<feature type="binding site" evidence="1">
    <location>
        <position position="22"/>
    </location>
    <ligand>
        <name>(6S)-5-formyl-5,6,7,8-tetrahydrofolate</name>
        <dbReference type="ChEBI" id="CHEBI:57457"/>
    </ligand>
</feature>
<feature type="binding site" evidence="1">
    <location>
        <position position="79"/>
    </location>
    <ligand>
        <name>(6S)-5-formyl-5,6,7,8-tetrahydrofolate</name>
        <dbReference type="ChEBI" id="CHEBI:57457"/>
    </ligand>
</feature>
<feature type="binding site" evidence="1">
    <location>
        <position position="119"/>
    </location>
    <ligand>
        <name>(6S)-5-formyl-5,6,7,8-tetrahydrofolate</name>
        <dbReference type="ChEBI" id="CHEBI:57457"/>
    </ligand>
</feature>
<feature type="binding site" evidence="1">
    <location>
        <begin position="225"/>
        <end position="230"/>
    </location>
    <ligand>
        <name>GTP</name>
        <dbReference type="ChEBI" id="CHEBI:37565"/>
    </ligand>
</feature>
<feature type="binding site" evidence="1">
    <location>
        <position position="225"/>
    </location>
    <ligand>
        <name>K(+)</name>
        <dbReference type="ChEBI" id="CHEBI:29103"/>
    </ligand>
</feature>
<feature type="binding site" evidence="1">
    <location>
        <position position="229"/>
    </location>
    <ligand>
        <name>Mg(2+)</name>
        <dbReference type="ChEBI" id="CHEBI:18420"/>
    </ligand>
</feature>
<feature type="binding site" evidence="1">
    <location>
        <begin position="244"/>
        <end position="250"/>
    </location>
    <ligand>
        <name>GTP</name>
        <dbReference type="ChEBI" id="CHEBI:37565"/>
    </ligand>
</feature>
<feature type="binding site" evidence="1">
    <location>
        <position position="244"/>
    </location>
    <ligand>
        <name>K(+)</name>
        <dbReference type="ChEBI" id="CHEBI:29103"/>
    </ligand>
</feature>
<feature type="binding site" evidence="1">
    <location>
        <position position="246"/>
    </location>
    <ligand>
        <name>K(+)</name>
        <dbReference type="ChEBI" id="CHEBI:29103"/>
    </ligand>
</feature>
<feature type="binding site" evidence="1">
    <location>
        <position position="249"/>
    </location>
    <ligand>
        <name>K(+)</name>
        <dbReference type="ChEBI" id="CHEBI:29103"/>
    </ligand>
</feature>
<feature type="binding site" evidence="1">
    <location>
        <position position="250"/>
    </location>
    <ligand>
        <name>Mg(2+)</name>
        <dbReference type="ChEBI" id="CHEBI:18420"/>
    </ligand>
</feature>
<feature type="binding site" evidence="1">
    <location>
        <begin position="269"/>
        <end position="272"/>
    </location>
    <ligand>
        <name>GTP</name>
        <dbReference type="ChEBI" id="CHEBI:37565"/>
    </ligand>
</feature>
<feature type="binding site" evidence="1">
    <location>
        <begin position="334"/>
        <end position="337"/>
    </location>
    <ligand>
        <name>GTP</name>
        <dbReference type="ChEBI" id="CHEBI:37565"/>
    </ligand>
</feature>
<feature type="binding site" evidence="1">
    <location>
        <position position="453"/>
    </location>
    <ligand>
        <name>(6S)-5-formyl-5,6,7,8-tetrahydrofolate</name>
        <dbReference type="ChEBI" id="CHEBI:57457"/>
    </ligand>
</feature>